<reference key="1">
    <citation type="journal article" date="2009" name="Genome Res.">
        <title>Comparative genomics of protoploid Saccharomycetaceae.</title>
        <authorList>
            <consortium name="The Genolevures Consortium"/>
            <person name="Souciet J.-L."/>
            <person name="Dujon B."/>
            <person name="Gaillardin C."/>
            <person name="Johnston M."/>
            <person name="Baret P.V."/>
            <person name="Cliften P."/>
            <person name="Sherman D.J."/>
            <person name="Weissenbach J."/>
            <person name="Westhof E."/>
            <person name="Wincker P."/>
            <person name="Jubin C."/>
            <person name="Poulain J."/>
            <person name="Barbe V."/>
            <person name="Segurens B."/>
            <person name="Artiguenave F."/>
            <person name="Anthouard V."/>
            <person name="Vacherie B."/>
            <person name="Val M.-E."/>
            <person name="Fulton R.S."/>
            <person name="Minx P."/>
            <person name="Wilson R."/>
            <person name="Durrens P."/>
            <person name="Jean G."/>
            <person name="Marck C."/>
            <person name="Martin T."/>
            <person name="Nikolski M."/>
            <person name="Rolland T."/>
            <person name="Seret M.-L."/>
            <person name="Casaregola S."/>
            <person name="Despons L."/>
            <person name="Fairhead C."/>
            <person name="Fischer G."/>
            <person name="Lafontaine I."/>
            <person name="Leh V."/>
            <person name="Lemaire M."/>
            <person name="de Montigny J."/>
            <person name="Neuveglise C."/>
            <person name="Thierry A."/>
            <person name="Blanc-Lenfle I."/>
            <person name="Bleykasten C."/>
            <person name="Diffels J."/>
            <person name="Fritsch E."/>
            <person name="Frangeul L."/>
            <person name="Goeffon A."/>
            <person name="Jauniaux N."/>
            <person name="Kachouri-Lafond R."/>
            <person name="Payen C."/>
            <person name="Potier S."/>
            <person name="Pribylova L."/>
            <person name="Ozanne C."/>
            <person name="Richard G.-F."/>
            <person name="Sacerdot C."/>
            <person name="Straub M.-L."/>
            <person name="Talla E."/>
        </authorList>
    </citation>
    <scope>NUCLEOTIDE SEQUENCE [LARGE SCALE GENOMIC DNA]</scope>
    <source>
        <strain>ATCC 56472 / CBS 6340 / NRRL Y-8284</strain>
    </source>
</reference>
<proteinExistence type="inferred from homology"/>
<organism>
    <name type="scientific">Lachancea thermotolerans (strain ATCC 56472 / CBS 6340 / NRRL Y-8284)</name>
    <name type="common">Yeast</name>
    <name type="synonym">Kluyveromyces thermotolerans</name>
    <dbReference type="NCBI Taxonomy" id="559295"/>
    <lineage>
        <taxon>Eukaryota</taxon>
        <taxon>Fungi</taxon>
        <taxon>Dikarya</taxon>
        <taxon>Ascomycota</taxon>
        <taxon>Saccharomycotina</taxon>
        <taxon>Saccharomycetes</taxon>
        <taxon>Saccharomycetales</taxon>
        <taxon>Saccharomycetaceae</taxon>
        <taxon>Lachancea</taxon>
    </lineage>
</organism>
<dbReference type="EMBL" id="CU928165">
    <property type="protein sequence ID" value="CAR21221.1"/>
    <property type="status" value="ALT_SEQ"/>
    <property type="molecule type" value="Genomic_DNA"/>
</dbReference>
<dbReference type="RefSeq" id="XP_002551663.1">
    <property type="nucleotide sequence ID" value="XM_002551617.1"/>
</dbReference>
<dbReference type="SMR" id="C5DBR4"/>
<dbReference type="FunCoup" id="C5DBR4">
    <property type="interactions" value="40"/>
</dbReference>
<dbReference type="STRING" id="559295.C5DBR4"/>
<dbReference type="GeneID" id="8290467"/>
<dbReference type="KEGG" id="lth:KLTH0A04752g"/>
<dbReference type="eggNOG" id="ENOG502S7YH">
    <property type="taxonomic scope" value="Eukaryota"/>
</dbReference>
<dbReference type="HOGENOM" id="CLU_137494_1_0_1"/>
<dbReference type="InParanoid" id="C5DBR4"/>
<dbReference type="OrthoDB" id="4034663at2759"/>
<dbReference type="Proteomes" id="UP000002036">
    <property type="component" value="Chromosome A"/>
</dbReference>
<dbReference type="GO" id="GO:0042995">
    <property type="term" value="C:cell projection"/>
    <property type="evidence" value="ECO:0007669"/>
    <property type="project" value="UniProtKB-SubCell"/>
</dbReference>
<dbReference type="GO" id="GO:0005737">
    <property type="term" value="C:cytoplasm"/>
    <property type="evidence" value="ECO:0007669"/>
    <property type="project" value="UniProtKB-SubCell"/>
</dbReference>
<dbReference type="CDD" id="cd21457">
    <property type="entry name" value="DLC-like_TDA2"/>
    <property type="match status" value="1"/>
</dbReference>
<protein>
    <recommendedName>
        <fullName>Topoisomerase I damage affected protein 2</fullName>
    </recommendedName>
</protein>
<name>TDA2_LACTC</name>
<feature type="chain" id="PRO_0000410732" description="Topoisomerase I damage affected protein 2">
    <location>
        <begin position="1"/>
        <end position="114"/>
    </location>
</feature>
<gene>
    <name type="primary">TDA2</name>
    <name type="ordered locus">KLTH0A04752g</name>
</gene>
<evidence type="ECO:0000250" key="1">
    <source>
        <dbReference type="UniProtKB" id="P40045"/>
    </source>
</evidence>
<evidence type="ECO:0000305" key="2"/>
<sequence>MPALEVNSVPSSSEFPVAPEKLASIIETSARDASSDDLGACTESILVELSKASSAHKFVVSLTKVAFSDSEDFNLSIDSSIGGSWNKTKDGGYSHSVETEAGARLLATVVWVSK</sequence>
<accession>C5DBR4</accession>
<comment type="subcellular location">
    <subcellularLocation>
        <location evidence="1">Cytoplasm</location>
    </subcellularLocation>
    <subcellularLocation>
        <location evidence="1">Cell projection</location>
    </subcellularLocation>
    <text evidence="1">Concentrates at cytoplasmic punctate structures and localizes at the mating projection tip.</text>
</comment>
<comment type="similarity">
    <text evidence="2">Belongs to the TDA2 family.</text>
</comment>
<comment type="sequence caution" evidence="2">
    <conflict type="erroneous gene model prediction">
        <sequence resource="EMBL-CDS" id="CAR21221"/>
    </conflict>
</comment>
<keyword id="KW-0966">Cell projection</keyword>
<keyword id="KW-0963">Cytoplasm</keyword>
<keyword id="KW-1185">Reference proteome</keyword>